<comment type="function">
    <text evidence="1">Catalyzes the synthesis of the hydroxymethylpyrimidine phosphate (HMP-P) moiety of thiamine from aminoimidazole ribotide (AIR) in a radical S-adenosyl-L-methionine (SAM)-dependent reaction.</text>
</comment>
<comment type="catalytic activity">
    <reaction evidence="1">
        <text>5-amino-1-(5-phospho-beta-D-ribosyl)imidazole + S-adenosyl-L-methionine = 4-amino-2-methyl-5-(phosphooxymethyl)pyrimidine + CO + 5'-deoxyadenosine + formate + L-methionine + 3 H(+)</text>
        <dbReference type="Rhea" id="RHEA:24840"/>
        <dbReference type="ChEBI" id="CHEBI:15378"/>
        <dbReference type="ChEBI" id="CHEBI:15740"/>
        <dbReference type="ChEBI" id="CHEBI:17245"/>
        <dbReference type="ChEBI" id="CHEBI:17319"/>
        <dbReference type="ChEBI" id="CHEBI:57844"/>
        <dbReference type="ChEBI" id="CHEBI:58354"/>
        <dbReference type="ChEBI" id="CHEBI:59789"/>
        <dbReference type="ChEBI" id="CHEBI:137981"/>
        <dbReference type="EC" id="4.1.99.17"/>
    </reaction>
</comment>
<comment type="cofactor">
    <cofactor evidence="1">
        <name>[4Fe-4S] cluster</name>
        <dbReference type="ChEBI" id="CHEBI:49883"/>
    </cofactor>
    <text evidence="1">Binds 1 [4Fe-4S] cluster per subunit. The cluster is coordinated with 3 cysteines and an exchangeable S-adenosyl-L-methionine.</text>
</comment>
<comment type="pathway">
    <text evidence="1">Cofactor biosynthesis; thiamine diphosphate biosynthesis.</text>
</comment>
<comment type="subunit">
    <text evidence="1">Homodimer.</text>
</comment>
<comment type="similarity">
    <text evidence="1">Belongs to the ThiC family.</text>
</comment>
<organism>
    <name type="scientific">Pectobacterium atrosepticum (strain SCRI 1043 / ATCC BAA-672)</name>
    <name type="common">Erwinia carotovora subsp. atroseptica</name>
    <dbReference type="NCBI Taxonomy" id="218491"/>
    <lineage>
        <taxon>Bacteria</taxon>
        <taxon>Pseudomonadati</taxon>
        <taxon>Pseudomonadota</taxon>
        <taxon>Gammaproteobacteria</taxon>
        <taxon>Enterobacterales</taxon>
        <taxon>Pectobacteriaceae</taxon>
        <taxon>Pectobacterium</taxon>
    </lineage>
</organism>
<sequence length="664" mass="74141">MSTEPLSINPLSAKPLSATQEPSTSSKPSRREQRAAAQRFIETLQGTAFPNSKRIYLTGSRDDIGVPMREIQLSPTLLGGSKDDPQYEPNEPIPVYDTSGPYGDPAAQPDVHVGLAKLRANWIAERHDTEALSGVSSDFTQQRMADAGLDHLRFEHLPRPLRAKAGKRVTQLHYARQGMITPEMEFIAIRENMGRERIRGEVLRQQHPGQSFGALLPENITPEFVRQEVAAGRAIIPSNINHPESEPMIIGRNFLVKVNANIGNSAVTSSIEEEVEKLVWSTRWGADTVMDLSTGRYIHETREWILRNSPVPIGTVPIYQALEKVNGVAENLNWEMFRDTLLEQAEQGVDYFTIHAGVLLRYVPMTAKRLTGIVSRGGSIMAKWCLSHHKESFLYEHFREICEICAAYDVALSLGDGLRPGSIQDANDEAQFAELHTLGELTKIAWEYDVQVMIEGPGHVPMQMIRRNMTEELEHCHEAPFYTLGPLTTDIAPGYDHFTSGIGAAMIGWFGCAMLCYVTPKEHLGLPNKEDVKQGLITYKIAAHAADLAKGHPGAQIRDNAMSKARFEFRWEDQFNLALDPQTARAYHDETLPQESGKVAHFCSMCGPKFCSMKISQEVRDYAAKQETEAKPIEIGMAEMSQEFRSRGSELYHSATSLQAEESK</sequence>
<reference key="1">
    <citation type="journal article" date="2004" name="Proc. Natl. Acad. Sci. U.S.A.">
        <title>Genome sequence of the enterobacterial phytopathogen Erwinia carotovora subsp. atroseptica and characterization of virulence factors.</title>
        <authorList>
            <person name="Bell K.S."/>
            <person name="Sebaihia M."/>
            <person name="Pritchard L."/>
            <person name="Holden M.T.G."/>
            <person name="Hyman L.J."/>
            <person name="Holeva M.C."/>
            <person name="Thomson N.R."/>
            <person name="Bentley S.D."/>
            <person name="Churcher L.J.C."/>
            <person name="Mungall K."/>
            <person name="Atkin R."/>
            <person name="Bason N."/>
            <person name="Brooks K."/>
            <person name="Chillingworth T."/>
            <person name="Clark K."/>
            <person name="Doggett J."/>
            <person name="Fraser A."/>
            <person name="Hance Z."/>
            <person name="Hauser H."/>
            <person name="Jagels K."/>
            <person name="Moule S."/>
            <person name="Norbertczak H."/>
            <person name="Ormond D."/>
            <person name="Price C."/>
            <person name="Quail M.A."/>
            <person name="Sanders M."/>
            <person name="Walker D."/>
            <person name="Whitehead S."/>
            <person name="Salmond G.P.C."/>
            <person name="Birch P.R.J."/>
            <person name="Parkhill J."/>
            <person name="Toth I.K."/>
        </authorList>
    </citation>
    <scope>NUCLEOTIDE SEQUENCE [LARGE SCALE GENOMIC DNA]</scope>
    <source>
        <strain>SCRI 1043 / ATCC BAA-672</strain>
    </source>
</reference>
<proteinExistence type="inferred from homology"/>
<evidence type="ECO:0000255" key="1">
    <source>
        <dbReference type="HAMAP-Rule" id="MF_00089"/>
    </source>
</evidence>
<evidence type="ECO:0000256" key="2">
    <source>
        <dbReference type="SAM" id="MobiDB-lite"/>
    </source>
</evidence>
<feature type="chain" id="PRO_0000242262" description="Phosphomethylpyrimidine synthase">
    <location>
        <begin position="1"/>
        <end position="664"/>
    </location>
</feature>
<feature type="region of interest" description="Disordered" evidence="2">
    <location>
        <begin position="1"/>
        <end position="37"/>
    </location>
</feature>
<feature type="compositionally biased region" description="Polar residues" evidence="2">
    <location>
        <begin position="1"/>
        <end position="10"/>
    </location>
</feature>
<feature type="compositionally biased region" description="Polar residues" evidence="2">
    <location>
        <begin position="17"/>
        <end position="27"/>
    </location>
</feature>
<feature type="binding site" evidence="1">
    <location>
        <position position="261"/>
    </location>
    <ligand>
        <name>substrate</name>
    </ligand>
</feature>
<feature type="binding site" evidence="1">
    <location>
        <position position="290"/>
    </location>
    <ligand>
        <name>substrate</name>
    </ligand>
</feature>
<feature type="binding site" evidence="1">
    <location>
        <position position="319"/>
    </location>
    <ligand>
        <name>substrate</name>
    </ligand>
</feature>
<feature type="binding site" evidence="1">
    <location>
        <position position="355"/>
    </location>
    <ligand>
        <name>substrate</name>
    </ligand>
</feature>
<feature type="binding site" evidence="1">
    <location>
        <begin position="375"/>
        <end position="377"/>
    </location>
    <ligand>
        <name>substrate</name>
    </ligand>
</feature>
<feature type="binding site" evidence="1">
    <location>
        <begin position="416"/>
        <end position="419"/>
    </location>
    <ligand>
        <name>substrate</name>
    </ligand>
</feature>
<feature type="binding site" evidence="1">
    <location>
        <position position="455"/>
    </location>
    <ligand>
        <name>substrate</name>
    </ligand>
</feature>
<feature type="binding site" evidence="1">
    <location>
        <position position="459"/>
    </location>
    <ligand>
        <name>Zn(2+)</name>
        <dbReference type="ChEBI" id="CHEBI:29105"/>
    </ligand>
</feature>
<feature type="binding site" evidence="1">
    <location>
        <position position="482"/>
    </location>
    <ligand>
        <name>substrate</name>
    </ligand>
</feature>
<feature type="binding site" evidence="1">
    <location>
        <position position="523"/>
    </location>
    <ligand>
        <name>Zn(2+)</name>
        <dbReference type="ChEBI" id="CHEBI:29105"/>
    </ligand>
</feature>
<feature type="binding site" evidence="1">
    <location>
        <position position="603"/>
    </location>
    <ligand>
        <name>[4Fe-4S] cluster</name>
        <dbReference type="ChEBI" id="CHEBI:49883"/>
        <note>4Fe-4S-S-AdoMet</note>
    </ligand>
</feature>
<feature type="binding site" evidence="1">
    <location>
        <position position="606"/>
    </location>
    <ligand>
        <name>[4Fe-4S] cluster</name>
        <dbReference type="ChEBI" id="CHEBI:49883"/>
        <note>4Fe-4S-S-AdoMet</note>
    </ligand>
</feature>
<feature type="binding site" evidence="1">
    <location>
        <position position="611"/>
    </location>
    <ligand>
        <name>[4Fe-4S] cluster</name>
        <dbReference type="ChEBI" id="CHEBI:49883"/>
        <note>4Fe-4S-S-AdoMet</note>
    </ligand>
</feature>
<dbReference type="EC" id="4.1.99.17" evidence="1"/>
<dbReference type="EMBL" id="BX950851">
    <property type="protein sequence ID" value="CAG73152.1"/>
    <property type="molecule type" value="Genomic_DNA"/>
</dbReference>
<dbReference type="RefSeq" id="WP_011091870.1">
    <property type="nucleotide sequence ID" value="NC_004547.2"/>
</dbReference>
<dbReference type="SMR" id="Q6DAM0"/>
<dbReference type="STRING" id="218491.ECA0232"/>
<dbReference type="KEGG" id="eca:ECA0232"/>
<dbReference type="PATRIC" id="fig|218491.5.peg.234"/>
<dbReference type="eggNOG" id="COG0422">
    <property type="taxonomic scope" value="Bacteria"/>
</dbReference>
<dbReference type="HOGENOM" id="CLU_013181_2_1_6"/>
<dbReference type="UniPathway" id="UPA00060"/>
<dbReference type="Proteomes" id="UP000007966">
    <property type="component" value="Chromosome"/>
</dbReference>
<dbReference type="GO" id="GO:0005829">
    <property type="term" value="C:cytosol"/>
    <property type="evidence" value="ECO:0007669"/>
    <property type="project" value="TreeGrafter"/>
</dbReference>
<dbReference type="GO" id="GO:0051539">
    <property type="term" value="F:4 iron, 4 sulfur cluster binding"/>
    <property type="evidence" value="ECO:0007669"/>
    <property type="project" value="UniProtKB-KW"/>
</dbReference>
<dbReference type="GO" id="GO:0016830">
    <property type="term" value="F:carbon-carbon lyase activity"/>
    <property type="evidence" value="ECO:0007669"/>
    <property type="project" value="InterPro"/>
</dbReference>
<dbReference type="GO" id="GO:0008270">
    <property type="term" value="F:zinc ion binding"/>
    <property type="evidence" value="ECO:0007669"/>
    <property type="project" value="UniProtKB-UniRule"/>
</dbReference>
<dbReference type="GO" id="GO:0009228">
    <property type="term" value="P:thiamine biosynthetic process"/>
    <property type="evidence" value="ECO:0007669"/>
    <property type="project" value="UniProtKB-KW"/>
</dbReference>
<dbReference type="GO" id="GO:0009229">
    <property type="term" value="P:thiamine diphosphate biosynthetic process"/>
    <property type="evidence" value="ECO:0007669"/>
    <property type="project" value="UniProtKB-UniRule"/>
</dbReference>
<dbReference type="FunFam" id="3.20.20.540:FF:000001">
    <property type="entry name" value="Phosphomethylpyrimidine synthase"/>
    <property type="match status" value="1"/>
</dbReference>
<dbReference type="Gene3D" id="6.10.250.620">
    <property type="match status" value="1"/>
</dbReference>
<dbReference type="Gene3D" id="3.20.20.540">
    <property type="entry name" value="Radical SAM ThiC family, central domain"/>
    <property type="match status" value="1"/>
</dbReference>
<dbReference type="HAMAP" id="MF_00089">
    <property type="entry name" value="ThiC"/>
    <property type="match status" value="1"/>
</dbReference>
<dbReference type="InterPro" id="IPR037509">
    <property type="entry name" value="ThiC"/>
</dbReference>
<dbReference type="InterPro" id="IPR025747">
    <property type="entry name" value="ThiC-associated_dom"/>
</dbReference>
<dbReference type="InterPro" id="IPR038521">
    <property type="entry name" value="ThiC/Bza_core_dom"/>
</dbReference>
<dbReference type="InterPro" id="IPR002817">
    <property type="entry name" value="ThiC/BzaA/B"/>
</dbReference>
<dbReference type="NCBIfam" id="NF006763">
    <property type="entry name" value="PRK09284.1"/>
    <property type="match status" value="1"/>
</dbReference>
<dbReference type="NCBIfam" id="NF009895">
    <property type="entry name" value="PRK13352.1"/>
    <property type="match status" value="1"/>
</dbReference>
<dbReference type="NCBIfam" id="TIGR00190">
    <property type="entry name" value="thiC"/>
    <property type="match status" value="1"/>
</dbReference>
<dbReference type="PANTHER" id="PTHR30557:SF1">
    <property type="entry name" value="PHOSPHOMETHYLPYRIMIDINE SYNTHASE, CHLOROPLASTIC"/>
    <property type="match status" value="1"/>
</dbReference>
<dbReference type="PANTHER" id="PTHR30557">
    <property type="entry name" value="THIAMINE BIOSYNTHESIS PROTEIN THIC"/>
    <property type="match status" value="1"/>
</dbReference>
<dbReference type="Pfam" id="PF13667">
    <property type="entry name" value="ThiC-associated"/>
    <property type="match status" value="1"/>
</dbReference>
<dbReference type="Pfam" id="PF01964">
    <property type="entry name" value="ThiC_Rad_SAM"/>
    <property type="match status" value="1"/>
</dbReference>
<dbReference type="SFLD" id="SFLDF00407">
    <property type="entry name" value="phosphomethylpyrimidine_syntha"/>
    <property type="match status" value="1"/>
</dbReference>
<dbReference type="SFLD" id="SFLDG01114">
    <property type="entry name" value="phosphomethylpyrimidine_syntha"/>
    <property type="match status" value="1"/>
</dbReference>
<dbReference type="SFLD" id="SFLDS00113">
    <property type="entry name" value="Radical_SAM_Phosphomethylpyrim"/>
    <property type="match status" value="1"/>
</dbReference>
<name>THIC_PECAS</name>
<gene>
    <name evidence="1" type="primary">thiC</name>
    <name type="ordered locus">ECA0232</name>
</gene>
<keyword id="KW-0004">4Fe-4S</keyword>
<keyword id="KW-0408">Iron</keyword>
<keyword id="KW-0411">Iron-sulfur</keyword>
<keyword id="KW-0456">Lyase</keyword>
<keyword id="KW-0479">Metal-binding</keyword>
<keyword id="KW-1185">Reference proteome</keyword>
<keyword id="KW-0949">S-adenosyl-L-methionine</keyword>
<keyword id="KW-0784">Thiamine biosynthesis</keyword>
<keyword id="KW-0862">Zinc</keyword>
<accession>Q6DAM0</accession>
<protein>
    <recommendedName>
        <fullName evidence="1">Phosphomethylpyrimidine synthase</fullName>
        <ecNumber evidence="1">4.1.99.17</ecNumber>
    </recommendedName>
    <alternativeName>
        <fullName evidence="1">Hydroxymethylpyrimidine phosphate synthase</fullName>
        <shortName evidence="1">HMP-P synthase</shortName>
        <shortName evidence="1">HMP-phosphate synthase</shortName>
        <shortName evidence="1">HMPP synthase</shortName>
    </alternativeName>
    <alternativeName>
        <fullName evidence="1">Thiamine biosynthesis protein ThiC</fullName>
    </alternativeName>
</protein>